<reference key="1">
    <citation type="journal article" date="2009" name="Genome Res.">
        <title>Comparative genomic analyses of the human fungal pathogens Coccidioides and their relatives.</title>
        <authorList>
            <person name="Sharpton T.J."/>
            <person name="Stajich J.E."/>
            <person name="Rounsley S.D."/>
            <person name="Gardner M.J."/>
            <person name="Wortman J.R."/>
            <person name="Jordar V.S."/>
            <person name="Maiti R."/>
            <person name="Kodira C.D."/>
            <person name="Neafsey D.E."/>
            <person name="Zeng Q."/>
            <person name="Hung C.-Y."/>
            <person name="McMahan C."/>
            <person name="Muszewska A."/>
            <person name="Grynberg M."/>
            <person name="Mandel M.A."/>
            <person name="Kellner E.M."/>
            <person name="Barker B.M."/>
            <person name="Galgiani J.N."/>
            <person name="Orbach M.J."/>
            <person name="Kirkland T.N."/>
            <person name="Cole G.T."/>
            <person name="Henn M.R."/>
            <person name="Birren B.W."/>
            <person name="Taylor J.W."/>
        </authorList>
    </citation>
    <scope>NUCLEOTIDE SEQUENCE [LARGE SCALE GENOMIC DNA]</scope>
    <source>
        <strain>RS</strain>
    </source>
</reference>
<reference key="2">
    <citation type="journal article" date="2010" name="Genome Res.">
        <title>Population genomic sequencing of Coccidioides fungi reveals recent hybridization and transposon control.</title>
        <authorList>
            <person name="Neafsey D.E."/>
            <person name="Barker B.M."/>
            <person name="Sharpton T.J."/>
            <person name="Stajich J.E."/>
            <person name="Park D.J."/>
            <person name="Whiston E."/>
            <person name="Hung C.-Y."/>
            <person name="McMahan C."/>
            <person name="White J."/>
            <person name="Sykes S."/>
            <person name="Heiman D."/>
            <person name="Young S."/>
            <person name="Zeng Q."/>
            <person name="Abouelleil A."/>
            <person name="Aftuck L."/>
            <person name="Bessette D."/>
            <person name="Brown A."/>
            <person name="FitzGerald M."/>
            <person name="Lui A."/>
            <person name="Macdonald J.P."/>
            <person name="Priest M."/>
            <person name="Orbach M.J."/>
            <person name="Galgiani J.N."/>
            <person name="Kirkland T.N."/>
            <person name="Cole G.T."/>
            <person name="Birren B.W."/>
            <person name="Henn M.R."/>
            <person name="Taylor J.W."/>
            <person name="Rounsley S.D."/>
        </authorList>
    </citation>
    <scope>GENOME REANNOTATION</scope>
    <source>
        <strain>RS</strain>
    </source>
</reference>
<feature type="chain" id="PRO_0000370518" description="tRNA (guanine-N(7)-)-methyltransferase non-catalytic subunit TRM82">
    <location>
        <begin position="1"/>
        <end position="520"/>
    </location>
</feature>
<feature type="repeat" description="WD 1">
    <location>
        <begin position="105"/>
        <end position="145"/>
    </location>
</feature>
<feature type="repeat" description="WD 2">
    <location>
        <begin position="244"/>
        <end position="291"/>
    </location>
</feature>
<feature type="repeat" description="WD 3">
    <location>
        <begin position="296"/>
        <end position="338"/>
    </location>
</feature>
<feature type="region of interest" description="Disordered" evidence="2">
    <location>
        <begin position="51"/>
        <end position="102"/>
    </location>
</feature>
<gene>
    <name evidence="1" type="primary">TRM82</name>
    <name type="ORF">CIMG_04885</name>
</gene>
<name>TRM82_COCIM</name>
<protein>
    <recommendedName>
        <fullName evidence="1">tRNA (guanine-N(7)-)-methyltransferase non-catalytic subunit TRM82</fullName>
    </recommendedName>
    <alternativeName>
        <fullName evidence="1">Transfer RNA methyltransferase 82</fullName>
    </alternativeName>
</protein>
<proteinExistence type="inferred from homology"/>
<dbReference type="EMBL" id="GG704914">
    <property type="protein sequence ID" value="EAS33861.3"/>
    <property type="molecule type" value="Genomic_DNA"/>
</dbReference>
<dbReference type="RefSeq" id="XP_001245444.1">
    <property type="nucleotide sequence ID" value="XM_001245443.2"/>
</dbReference>
<dbReference type="STRING" id="246410.Q1DXS8"/>
<dbReference type="GeneID" id="4563280"/>
<dbReference type="KEGG" id="cim:CIMG_04885"/>
<dbReference type="VEuPathDB" id="FungiDB:CIMG_04885"/>
<dbReference type="InParanoid" id="Q1DXS8"/>
<dbReference type="OMA" id="SERCMPK"/>
<dbReference type="OrthoDB" id="339900at2759"/>
<dbReference type="UniPathway" id="UPA00989"/>
<dbReference type="Proteomes" id="UP000001261">
    <property type="component" value="Unassembled WGS sequence"/>
</dbReference>
<dbReference type="GO" id="GO:0005829">
    <property type="term" value="C:cytosol"/>
    <property type="evidence" value="ECO:0007669"/>
    <property type="project" value="TreeGrafter"/>
</dbReference>
<dbReference type="GO" id="GO:0005634">
    <property type="term" value="C:nucleus"/>
    <property type="evidence" value="ECO:0007669"/>
    <property type="project" value="UniProtKB-SubCell"/>
</dbReference>
<dbReference type="GO" id="GO:0043527">
    <property type="term" value="C:tRNA methyltransferase complex"/>
    <property type="evidence" value="ECO:0007669"/>
    <property type="project" value="TreeGrafter"/>
</dbReference>
<dbReference type="GO" id="GO:0106004">
    <property type="term" value="P:tRNA (guanine-N7)-methylation"/>
    <property type="evidence" value="ECO:0007669"/>
    <property type="project" value="UniProtKB-UniRule"/>
</dbReference>
<dbReference type="Gene3D" id="2.130.10.10">
    <property type="entry name" value="YVTN repeat-like/Quinoprotein amine dehydrogenase"/>
    <property type="match status" value="1"/>
</dbReference>
<dbReference type="HAMAP" id="MF_03056">
    <property type="entry name" value="TRM82"/>
    <property type="match status" value="1"/>
</dbReference>
<dbReference type="InterPro" id="IPR028884">
    <property type="entry name" value="Trm82"/>
</dbReference>
<dbReference type="InterPro" id="IPR015943">
    <property type="entry name" value="WD40/YVTN_repeat-like_dom_sf"/>
</dbReference>
<dbReference type="InterPro" id="IPR036322">
    <property type="entry name" value="WD40_repeat_dom_sf"/>
</dbReference>
<dbReference type="InterPro" id="IPR001680">
    <property type="entry name" value="WD40_rpt"/>
</dbReference>
<dbReference type="PANTHER" id="PTHR16288:SF0">
    <property type="entry name" value="TRNA (GUANINE-N(7)-)-METHYLTRANSFERASE NON-CATALYTIC SUBUNIT WDR4"/>
    <property type="match status" value="1"/>
</dbReference>
<dbReference type="PANTHER" id="PTHR16288">
    <property type="entry name" value="WD40 REPEAT PROTEIN 4"/>
    <property type="match status" value="1"/>
</dbReference>
<dbReference type="SMART" id="SM00320">
    <property type="entry name" value="WD40"/>
    <property type="match status" value="3"/>
</dbReference>
<dbReference type="SUPFAM" id="SSF50978">
    <property type="entry name" value="WD40 repeat-like"/>
    <property type="match status" value="1"/>
</dbReference>
<comment type="function">
    <text evidence="1">Required for the formation of N(7)-methylguanine at position 46 (m7G46) in tRNA. In the complex, it is required to stabilize and induce conformational changes of the catalytic subunit.</text>
</comment>
<comment type="pathway">
    <text evidence="1">tRNA modification; N(7)-methylguanine-tRNA biosynthesis.</text>
</comment>
<comment type="subunit">
    <text evidence="1">Forms a heterodimer with the catalytic subunit TRM8.</text>
</comment>
<comment type="subcellular location">
    <subcellularLocation>
        <location evidence="1">Nucleus</location>
    </subcellularLocation>
</comment>
<comment type="similarity">
    <text evidence="1">Belongs to the WD repeat TRM82 family.</text>
</comment>
<organism>
    <name type="scientific">Coccidioides immitis (strain RS)</name>
    <name type="common">Valley fever fungus</name>
    <dbReference type="NCBI Taxonomy" id="246410"/>
    <lineage>
        <taxon>Eukaryota</taxon>
        <taxon>Fungi</taxon>
        <taxon>Dikarya</taxon>
        <taxon>Ascomycota</taxon>
        <taxon>Pezizomycotina</taxon>
        <taxon>Eurotiomycetes</taxon>
        <taxon>Eurotiomycetidae</taxon>
        <taxon>Onygenales</taxon>
        <taxon>Onygenaceae</taxon>
        <taxon>Coccidioides</taxon>
    </lineage>
</organism>
<sequence length="520" mass="56257">MSLRYPISRIRHFRCQLRELLAAVAGPSIRIFDAGTGSLLSSWPPASYMRPLDSEISPDRASSAGTCAEPPEKRRKLTPPVDESGEAQTEQSAKAKARKSQTAEQAWSTIPILVISGTGDHIVAVTGEDKCLRVFEVKQDGKLTQLTERCIPKRPCAISLTPDNNTILCGDKFGDVYSLPLLPRDEVVLPLRKAAESSKPFQPSATKLTVHTQRNLKALEQQLRTPRAAQEKLEPSFQHRLLLGHVSMLTDLILAPVPSDSSTSPRLYIITSDRDEHIRVSRGPSQAHIIHGYCLGHTSFVSKLCIPPWDPRSLISGGGDNCIICWDWLAGRVAQTIPLVHDGDVAESTKAQPPQSDAPDIAVSGIYAIPFSGNPGLTEHASGGILVALEGVSRLLAFSFGTNGRLTALAPIELSGNALDVVALDDRGTILVSVDNVHKPGSTKELRDSAIGPKLLQCFSARSDGGLKWEESSTQAATTINSREAVDIIAETESRKQVQKISDSLYGIGNLRKWARGEDG</sequence>
<keyword id="KW-0539">Nucleus</keyword>
<keyword id="KW-1185">Reference proteome</keyword>
<keyword id="KW-0677">Repeat</keyword>
<keyword id="KW-0819">tRNA processing</keyword>
<keyword id="KW-0853">WD repeat</keyword>
<accession>Q1DXS8</accession>
<accession>J3KEY4</accession>
<evidence type="ECO:0000255" key="1">
    <source>
        <dbReference type="HAMAP-Rule" id="MF_03056"/>
    </source>
</evidence>
<evidence type="ECO:0000256" key="2">
    <source>
        <dbReference type="SAM" id="MobiDB-lite"/>
    </source>
</evidence>